<organism>
    <name type="scientific">Mycobacterium tuberculosis (strain ATCC 25618 / H37Rv)</name>
    <dbReference type="NCBI Taxonomy" id="83332"/>
    <lineage>
        <taxon>Bacteria</taxon>
        <taxon>Bacillati</taxon>
        <taxon>Actinomycetota</taxon>
        <taxon>Actinomycetes</taxon>
        <taxon>Mycobacteriales</taxon>
        <taxon>Mycobacteriaceae</taxon>
        <taxon>Mycobacterium</taxon>
        <taxon>Mycobacterium tuberculosis complex</taxon>
    </lineage>
</organism>
<sequence length="1178" mass="129865">MLEGCILADSRQSKTAASPSPSRPQSSSNNSVPGAPNRVSFAKLREPLEVPGLLDVQTDSFEWLIGSPRWRESAAERGDVNPVGGLEEVLYELSPIEDFSGSMSLSFSDPRFDDVKAPVDECKDKDMTYAAPLFVTAEFINNNTGEIKSQTVFMGDFPMMTEKGTFIINGTERVVVSQLVRSPGVYFDETIDKSTDKTLHSVKVIPSRGAWLEFDVDKRDTVGVRIDRKRRQPVTVLLKALGWTSEQIVERFGFSEIMRSTLEKDNTVGTDEALLDIYRKLRPGEPPTKESAQTLLENLFFKEKRYDLARVGRYKVNKKLGLHVGEPITSSTLTEEDVVATIEYLVRLHEGQTTMTVPGGVEVPVETDDIDHFGNRRLRTVGELIQNQIRVGMSRMERVVRERMTTQDVEAITPQTLINIRPVVAAIKEFFGTSQLSQFMDQNNPLSGLTHKRRLSALGPGGLSRERAGLEVRDVHPSHYGRMCPIETPEGPNIGLIGSLSVYARVNPFGFIETPYRKVVDGVVSDEIVYLTADEEDRHVVAQANSPIDADGRFVEPRVLVRRKAGEVEYVPSSEVDYMDVSPRQMVSVATAMIPFLEHDDANRALMGANMQRQAVPLVRSEAPLVGTGMELRAAIDAGDVVVAEESGVIEEVSADYITVMHDNGTRRTYRMRKFARSNHGTCANQCPIVDAGDRVEAGQVIADGPCTDDGEMALGKNLLVAIMPWEGHNYEDAIILSNRLVEEDVLTSIHIEEHEIDARDTKLGAEEITRDIPNISDEVLADLDERGIVRIGAEVRDGDILVGKVTPKGETELTPEERLLRAIFGEKAREVRDTSLKVPHGESGKVIGIRVFSREDEDELPAGVNELVRVYVAQKRKISDGDKLAGRHGNKGVIGKILPVEDMPFLADGTPVDIILNTHGVPRRMNIGQILETHLGWCAHSGWKVDAAKGVPDWAARLPDELLEAQPNAIVSTPVFDGAQEAELQGLLSCTLPNRDGDVLVDADGKAMLFDGRSGEPFPYPVTVGYMYIMKLHHLVDDKIHARSTGPYSMITQQPLGGKAQFGGQRFGEMECWAMQAYGAAYTLQELLTIKSDDTVGRVKVYEAIVKGENIPEPGIPESFKVLLKELQSLCLNVEVLSSDGAAIELREGEDEDLERAAANLGINLSRNESASVEDLA</sequence>
<comment type="function">
    <text evidence="1 3">DNA-dependent RNA polymerase catalyzes the transcription of DNA into RNA using the four ribonucleoside triphosphates as substrates.</text>
</comment>
<comment type="catalytic activity">
    <reaction evidence="1">
        <text>RNA(n) + a ribonucleoside 5'-triphosphate = RNA(n+1) + diphosphate</text>
        <dbReference type="Rhea" id="RHEA:21248"/>
        <dbReference type="Rhea" id="RHEA-COMP:14527"/>
        <dbReference type="Rhea" id="RHEA-COMP:17342"/>
        <dbReference type="ChEBI" id="CHEBI:33019"/>
        <dbReference type="ChEBI" id="CHEBI:61557"/>
        <dbReference type="ChEBI" id="CHEBI:140395"/>
        <dbReference type="EC" id="2.7.7.6"/>
    </reaction>
</comment>
<comment type="subunit">
    <text evidence="1 3 4">The RNAP catalytic core consists of 2 alpha, 1 beta, 1 beta' and 1 omega subunit. When a sigma factor is associated with the core the holoenzyme is formed, which can initiate transcription. Interacts with CarD, TRCF (Mfd) and RbpA.</text>
</comment>
<comment type="interaction">
    <interactant intactId="EBI-6419676">
        <id>P9WGY9</id>
    </interactant>
    <interactant intactId="EBI-6421028">
        <id>P9WJG3</id>
        <label>carD</label>
    </interactant>
    <organismsDiffer>false</organismsDiffer>
    <experiments>5</experiments>
</comment>
<comment type="similarity">
    <text evidence="1">Belongs to the RNA polymerase beta chain family.</text>
</comment>
<comment type="sequence caution" evidence="5">
    <conflict type="erroneous initiation">
        <sequence resource="EMBL-CDS" id="CCP43410"/>
    </conflict>
    <text>Truncated N-terminus.</text>
</comment>
<gene>
    <name evidence="1" type="primary">rpoB</name>
    <name type="ordered locus">Rv0667</name>
    <name type="ORF">MTCI376.08c</name>
</gene>
<name>RPOB_MYCTU</name>
<keyword id="KW-0002">3D-structure</keyword>
<keyword id="KW-0046">Antibiotic resistance</keyword>
<keyword id="KW-0240">DNA-directed RNA polymerase</keyword>
<keyword id="KW-0548">Nucleotidyltransferase</keyword>
<keyword id="KW-1185">Reference proteome</keyword>
<keyword id="KW-0804">Transcription</keyword>
<keyword id="KW-0808">Transferase</keyword>
<reference key="1">
    <citation type="journal article" date="1994" name="Antimicrob. Agents Chemother.">
        <title>The rpoB gene of Mycobacterium tuberculosis.</title>
        <authorList>
            <person name="Miller L.P."/>
            <person name="Crawford J.T."/>
            <person name="Shinnick T.M."/>
        </authorList>
    </citation>
    <scope>NUCLEOTIDE SEQUENCE [GENOMIC DNA]</scope>
    <source>
        <strain>ATCC 25618 / H37Rv</strain>
    </source>
</reference>
<reference key="2">
    <citation type="journal article" date="1998" name="Nature">
        <title>Deciphering the biology of Mycobacterium tuberculosis from the complete genome sequence.</title>
        <authorList>
            <person name="Cole S.T."/>
            <person name="Brosch R."/>
            <person name="Parkhill J."/>
            <person name="Garnier T."/>
            <person name="Churcher C.M."/>
            <person name="Harris D.E."/>
            <person name="Gordon S.V."/>
            <person name="Eiglmeier K."/>
            <person name="Gas S."/>
            <person name="Barry C.E. III"/>
            <person name="Tekaia F."/>
            <person name="Badcock K."/>
            <person name="Basham D."/>
            <person name="Brown D."/>
            <person name="Chillingworth T."/>
            <person name="Connor R."/>
            <person name="Davies R.M."/>
            <person name="Devlin K."/>
            <person name="Feltwell T."/>
            <person name="Gentles S."/>
            <person name="Hamlin N."/>
            <person name="Holroyd S."/>
            <person name="Hornsby T."/>
            <person name="Jagels K."/>
            <person name="Krogh A."/>
            <person name="McLean J."/>
            <person name="Moule S."/>
            <person name="Murphy L.D."/>
            <person name="Oliver S."/>
            <person name="Osborne J."/>
            <person name="Quail M.A."/>
            <person name="Rajandream M.A."/>
            <person name="Rogers J."/>
            <person name="Rutter S."/>
            <person name="Seeger K."/>
            <person name="Skelton S."/>
            <person name="Squares S."/>
            <person name="Squares R."/>
            <person name="Sulston J.E."/>
            <person name="Taylor K."/>
            <person name="Whitehead S."/>
            <person name="Barrell B.G."/>
        </authorList>
    </citation>
    <scope>NUCLEOTIDE SEQUENCE [LARGE SCALE GENOMIC DNA]</scope>
    <source>
        <strain>ATCC 25618 / H37Rv</strain>
    </source>
</reference>
<reference key="3">
    <citation type="submission" date="1994-07" db="EMBL/GenBank/DDBJ databases">
        <title>The rpoB gene of Mycobacterium tuberculosis.</title>
        <authorList>
            <person name="Imboden P."/>
            <person name="Troller R."/>
            <person name="Marchesi F."/>
            <person name="Telenti A."/>
            <person name="Bodmer T."/>
            <person name="Cole S."/>
            <person name="Schopfer K."/>
            <person name="Burkart T."/>
        </authorList>
    </citation>
    <scope>NUCLEOTIDE SEQUENCE [GENOMIC DNA] OF 1-1093</scope>
    <source>
        <strain>ATCC 25618 / H37Rv</strain>
    </source>
</reference>
<reference key="4">
    <citation type="journal article" date="1993" name="Lancet">
        <title>Detection of rifampicin-resistance mutations in Mycobacterium tuberculosis.</title>
        <authorList>
            <person name="Telenti A."/>
            <person name="Imboden P."/>
            <person name="Marchesi F."/>
            <person name="Lowrie D."/>
            <person name="Cole S.T."/>
            <person name="Colston J."/>
            <person name="Matter L."/>
            <person name="Schopfer K."/>
            <person name="Bodmer T."/>
        </authorList>
    </citation>
    <scope>NUCLEOTIDE SEQUENCE [GENOMIC DNA] OF 374-517</scope>
    <source>
        <strain>ATCC 25618 / H37Rv</strain>
    </source>
</reference>
<reference key="5">
    <citation type="journal article" date="2000" name="J. Clin. Microbiol.">
        <title>Mutations in the rpoB gene of multidrug-resistant Mycobacterium tuberculosis isolates from Brazil.</title>
        <authorList>
            <person name="Valim A.R.M."/>
            <person name="Rossetti M.L.R."/>
            <person name="Ribeiro M.O."/>
            <person name="Zaha A."/>
        </authorList>
    </citation>
    <scope>NUCLEOTIDE SEQUENCE [GENOMIC DNA] OF 424-475</scope>
    <scope>VARIANTS RIFAMPICIN RESISTANT</scope>
</reference>
<reference key="6">
    <citation type="journal article" date="1994" name="J. Clin. Microbiol.">
        <title>Characterization by automated DNA sequencing of mutations in the gene (rpoB) encoding the RNA polymerase beta subunit in rifampin-resistant Mycobacterium tuberculosis strains from New York City and Texas.</title>
        <authorList>
            <person name="Kapur V."/>
            <person name="Li L.L."/>
            <person name="Iordanescu S."/>
            <person name="Hamrick M.R."/>
            <person name="Wanger A."/>
            <person name="Kreiswirth B.N."/>
            <person name="Musser J.M."/>
        </authorList>
    </citation>
    <scope>NUCLEOTIDE SEQUENCE [GENOMIC DNA] OF 436-458</scope>
</reference>
<reference key="7">
    <citation type="journal article" date="2011" name="Mol. Cell. Proteomics">
        <title>Proteogenomic analysis of Mycobacterium tuberculosis by high resolution mass spectrometry.</title>
        <authorList>
            <person name="Kelkar D.S."/>
            <person name="Kumar D."/>
            <person name="Kumar P."/>
            <person name="Balakrishnan L."/>
            <person name="Muthusamy B."/>
            <person name="Yadav A.K."/>
            <person name="Shrivastava P."/>
            <person name="Marimuthu A."/>
            <person name="Anand S."/>
            <person name="Sundaram H."/>
            <person name="Kingsbury R."/>
            <person name="Harsha H.C."/>
            <person name="Nair B."/>
            <person name="Prasad T.S."/>
            <person name="Chauhan D.S."/>
            <person name="Katoch K."/>
            <person name="Katoch V.M."/>
            <person name="Kumar P."/>
            <person name="Chaerkady R."/>
            <person name="Ramachandran S."/>
            <person name="Dash D."/>
            <person name="Pandey A."/>
        </authorList>
    </citation>
    <scope>IDENTIFICATION BY MASS SPECTROMETRY [LARGE SCALE ANALYSIS]</scope>
    <source>
        <strain>ATCC 25618 / H37Rv</strain>
    </source>
</reference>
<reference key="8">
    <citation type="journal article" date="2012" name="J. Bacteriol.">
        <title>Interaction of CarD with RNA polymerase mediates Mycobacterium tuberculosis viability, rifampicin resistance, and pathogenesis.</title>
        <authorList>
            <person name="Weiss L.A."/>
            <person name="Harrison P.G."/>
            <person name="Nickels B.E."/>
            <person name="Glickman M.S."/>
            <person name="Campbell E.A."/>
            <person name="Darst S.A."/>
            <person name="Stallings C.L."/>
        </authorList>
    </citation>
    <scope>INTERACTION WITH CARD AND TRCF</scope>
    <scope>MUTAGENESIS OF GLU-138; ILE-147; LYS-148 AND SER-149</scope>
    <source>
        <strain>Erdman</strain>
    </source>
</reference>
<reference key="9">
    <citation type="journal article" date="2012" name="Nucleic Acids Res.">
        <title>Mycobacterium tuberculosis RbpA protein is a new type of transcriptional activator that stabilizes the sigma A-containing RNA polymerase holoenzyme.</title>
        <authorList>
            <person name="Hu Y."/>
            <person name="Morichaud Z."/>
            <person name="Chen S."/>
            <person name="Leonetti J.P."/>
            <person name="Brodolin K."/>
        </authorList>
    </citation>
    <scope>FUNCTION</scope>
    <scope>INTERACTION WITH RBPA</scope>
    <scope>SUBUNIT</scope>
    <source>
        <strain>ATCC 25618 / H37Rv</strain>
    </source>
</reference>
<protein>
    <recommendedName>
        <fullName evidence="1">DNA-directed RNA polymerase subunit beta</fullName>
        <shortName evidence="1">RNAP subunit beta</shortName>
        <ecNumber evidence="1">2.7.7.6</ecNumber>
    </recommendedName>
    <alternativeName>
        <fullName evidence="1">RNA polymerase subunit beta</fullName>
    </alternativeName>
    <alternativeName>
        <fullName evidence="1">Transcriptase subunit beta</fullName>
    </alternativeName>
</protein>
<dbReference type="EC" id="2.7.7.6" evidence="1"/>
<dbReference type="EMBL" id="L27989">
    <property type="protein sequence ID" value="AAA21416.1"/>
    <property type="molecule type" value="Genomic_DNA"/>
</dbReference>
<dbReference type="EMBL" id="AL123456">
    <property type="protein sequence ID" value="CCP43410.1"/>
    <property type="status" value="ALT_INIT"/>
    <property type="molecule type" value="Genomic_DNA"/>
</dbReference>
<dbReference type="EMBL" id="U12205">
    <property type="protein sequence ID" value="AAA20242.2"/>
    <property type="molecule type" value="Genomic_DNA"/>
</dbReference>
<dbReference type="EMBL" id="L05910">
    <property type="protein sequence ID" value="AAB59068.1"/>
    <property type="molecule type" value="Genomic_DNA"/>
</dbReference>
<dbReference type="EMBL" id="AF143771">
    <property type="protein sequence ID" value="AAD29720.1"/>
    <property type="molecule type" value="Genomic_DNA"/>
</dbReference>
<dbReference type="EMBL" id="AF146567">
    <property type="protein sequence ID" value="AAD37379.1"/>
    <property type="molecule type" value="Genomic_DNA"/>
</dbReference>
<dbReference type="EMBL" id="AF147030">
    <property type="protein sequence ID" value="AAD45505.1"/>
    <property type="molecule type" value="Genomic_DNA"/>
</dbReference>
<dbReference type="EMBL" id="AF147031">
    <property type="protein sequence ID" value="AAD45506.1"/>
    <property type="molecule type" value="Genomic_DNA"/>
</dbReference>
<dbReference type="EMBL" id="AF147033">
    <property type="protein sequence ID" value="AAD45507.1"/>
    <property type="molecule type" value="Genomic_DNA"/>
</dbReference>
<dbReference type="EMBL" id="AF147034">
    <property type="protein sequence ID" value="AAD45508.1"/>
    <property type="molecule type" value="Genomic_DNA"/>
</dbReference>
<dbReference type="EMBL" id="S71246">
    <property type="protein sequence ID" value="AAB31207.1"/>
    <property type="molecule type" value="Genomic_DNA"/>
</dbReference>
<dbReference type="PIR" id="F70535">
    <property type="entry name" value="F70535"/>
</dbReference>
<dbReference type="RefSeq" id="NP_215181.1">
    <property type="nucleotide sequence ID" value="NC_000962.3"/>
</dbReference>
<dbReference type="PDB" id="4KBJ">
    <property type="method" value="X-ray"/>
    <property type="resolution" value="2.45 A"/>
    <property type="chains" value="A/B=53-439"/>
</dbReference>
<dbReference type="PDB" id="4KBM">
    <property type="method" value="X-ray"/>
    <property type="resolution" value="2.11 A"/>
    <property type="chains" value="A=53-439"/>
</dbReference>
<dbReference type="PDB" id="5UH5">
    <property type="method" value="X-ray"/>
    <property type="resolution" value="3.75 A"/>
    <property type="chains" value="C=1-1178"/>
</dbReference>
<dbReference type="PDB" id="5UH6">
    <property type="method" value="X-ray"/>
    <property type="resolution" value="3.84 A"/>
    <property type="chains" value="C=1-1178"/>
</dbReference>
<dbReference type="PDB" id="5UH8">
    <property type="method" value="X-ray"/>
    <property type="resolution" value="4.18 A"/>
    <property type="chains" value="C=1-1178"/>
</dbReference>
<dbReference type="PDB" id="5UH9">
    <property type="method" value="X-ray"/>
    <property type="resolution" value="4.40 A"/>
    <property type="chains" value="C=1-1178"/>
</dbReference>
<dbReference type="PDB" id="5UHA">
    <property type="method" value="X-ray"/>
    <property type="resolution" value="3.91 A"/>
    <property type="chains" value="C=1-1178"/>
</dbReference>
<dbReference type="PDB" id="5UHB">
    <property type="method" value="X-ray"/>
    <property type="resolution" value="4.29 A"/>
    <property type="chains" value="C=1-1178"/>
</dbReference>
<dbReference type="PDB" id="5UHC">
    <property type="method" value="X-ray"/>
    <property type="resolution" value="3.80 A"/>
    <property type="chains" value="C=1-1178"/>
</dbReference>
<dbReference type="PDB" id="5UHD">
    <property type="method" value="X-ray"/>
    <property type="resolution" value="4.01 A"/>
    <property type="chains" value="C=1-1178"/>
</dbReference>
<dbReference type="PDB" id="5UHE">
    <property type="method" value="X-ray"/>
    <property type="resolution" value="4.04 A"/>
    <property type="chains" value="C=1-1178"/>
</dbReference>
<dbReference type="PDB" id="5UHF">
    <property type="method" value="X-ray"/>
    <property type="resolution" value="4.34 A"/>
    <property type="chains" value="C=1-1178"/>
</dbReference>
<dbReference type="PDB" id="5UHG">
    <property type="method" value="X-ray"/>
    <property type="resolution" value="3.97 A"/>
    <property type="chains" value="C=1-1178"/>
</dbReference>
<dbReference type="PDB" id="5ZX2">
    <property type="method" value="X-ray"/>
    <property type="resolution" value="2.80 A"/>
    <property type="chains" value="C=7-1178"/>
</dbReference>
<dbReference type="PDB" id="5ZX3">
    <property type="method" value="X-ray"/>
    <property type="resolution" value="2.75 A"/>
    <property type="chains" value="C=7-1178"/>
</dbReference>
<dbReference type="PDB" id="6BZO">
    <property type="method" value="EM"/>
    <property type="resolution" value="3.38 A"/>
    <property type="chains" value="C=7-1178"/>
</dbReference>
<dbReference type="PDB" id="6C04">
    <property type="method" value="EM"/>
    <property type="resolution" value="3.27 A"/>
    <property type="chains" value="C=7-1178"/>
</dbReference>
<dbReference type="PDB" id="6C05">
    <property type="method" value="EM"/>
    <property type="resolution" value="5.15 A"/>
    <property type="chains" value="C=7-1178"/>
</dbReference>
<dbReference type="PDB" id="6C06">
    <property type="method" value="EM"/>
    <property type="resolution" value="5.15 A"/>
    <property type="chains" value="C=7-1178"/>
</dbReference>
<dbReference type="PDB" id="6DV9">
    <property type="method" value="X-ray"/>
    <property type="resolution" value="3.80 A"/>
    <property type="chains" value="C=1-1178"/>
</dbReference>
<dbReference type="PDB" id="6DVB">
    <property type="method" value="X-ray"/>
    <property type="resolution" value="3.80 A"/>
    <property type="chains" value="C=1-1178"/>
</dbReference>
<dbReference type="PDB" id="6DVC">
    <property type="method" value="X-ray"/>
    <property type="resolution" value="3.30 A"/>
    <property type="chains" value="C=1-1178"/>
</dbReference>
<dbReference type="PDB" id="6DVD">
    <property type="method" value="X-ray"/>
    <property type="resolution" value="3.90 A"/>
    <property type="chains" value="C=1-1178"/>
</dbReference>
<dbReference type="PDB" id="6DVE">
    <property type="method" value="X-ray"/>
    <property type="resolution" value="3.81 A"/>
    <property type="chains" value="C=1-1178"/>
</dbReference>
<dbReference type="PDB" id="6EDT">
    <property type="method" value="EM"/>
    <property type="chains" value="C=7-1140"/>
</dbReference>
<dbReference type="PDB" id="6EE8">
    <property type="method" value="EM"/>
    <property type="resolution" value="3.92 A"/>
    <property type="chains" value="C=7-1140"/>
</dbReference>
<dbReference type="PDB" id="6EEC">
    <property type="method" value="EM"/>
    <property type="resolution" value="3.55 A"/>
    <property type="chains" value="C=7-1178"/>
</dbReference>
<dbReference type="PDB" id="6FBV">
    <property type="method" value="EM"/>
    <property type="resolution" value="3.50 A"/>
    <property type="chains" value="C=1-1178"/>
</dbReference>
<dbReference type="PDB" id="6JCX">
    <property type="method" value="X-ray"/>
    <property type="resolution" value="2.90 A"/>
    <property type="chains" value="C=7-1178"/>
</dbReference>
<dbReference type="PDB" id="6JCY">
    <property type="method" value="X-ray"/>
    <property type="resolution" value="3.11 A"/>
    <property type="chains" value="C=7-1178"/>
</dbReference>
<dbReference type="PDB" id="6KON">
    <property type="method" value="X-ray"/>
    <property type="resolution" value="3.00 A"/>
    <property type="chains" value="C=7-1178"/>
</dbReference>
<dbReference type="PDB" id="6KOO">
    <property type="method" value="X-ray"/>
    <property type="resolution" value="2.80 A"/>
    <property type="chains" value="C=7-1178"/>
</dbReference>
<dbReference type="PDB" id="6KOP">
    <property type="method" value="X-ray"/>
    <property type="resolution" value="3.30 A"/>
    <property type="chains" value="C=7-1178"/>
</dbReference>
<dbReference type="PDB" id="6KOQ">
    <property type="method" value="X-ray"/>
    <property type="resolution" value="3.35 A"/>
    <property type="chains" value="C=7-1178"/>
</dbReference>
<dbReference type="PDB" id="6M7J">
    <property type="method" value="EM"/>
    <property type="resolution" value="4.40 A"/>
    <property type="chains" value="C=7-1178"/>
</dbReference>
<dbReference type="PDB" id="6TYE">
    <property type="method" value="X-ray"/>
    <property type="resolution" value="3.79 A"/>
    <property type="chains" value="C=1-1178"/>
</dbReference>
<dbReference type="PDB" id="6TYF">
    <property type="method" value="X-ray"/>
    <property type="resolution" value="3.80 A"/>
    <property type="chains" value="C=1-1178"/>
</dbReference>
<dbReference type="PDB" id="6TYG">
    <property type="method" value="X-ray"/>
    <property type="resolution" value="3.50 A"/>
    <property type="chains" value="C=1-1178"/>
</dbReference>
<dbReference type="PDB" id="6VVX">
    <property type="method" value="EM"/>
    <property type="resolution" value="3.39 A"/>
    <property type="chains" value="C=7-1178"/>
</dbReference>
<dbReference type="PDB" id="6VVY">
    <property type="method" value="EM"/>
    <property type="resolution" value="3.42 A"/>
    <property type="chains" value="C=7-1178"/>
</dbReference>
<dbReference type="PDB" id="6VVZ">
    <property type="method" value="EM"/>
    <property type="resolution" value="3.72 A"/>
    <property type="chains" value="C=7-1178"/>
</dbReference>
<dbReference type="PDB" id="6VW0">
    <property type="method" value="EM"/>
    <property type="resolution" value="3.59 A"/>
    <property type="chains" value="C=7-1178"/>
</dbReference>
<dbReference type="PDB" id="7KIF">
    <property type="method" value="EM"/>
    <property type="resolution" value="2.94 A"/>
    <property type="chains" value="C=7-1178"/>
</dbReference>
<dbReference type="PDB" id="7KIM">
    <property type="method" value="EM"/>
    <property type="resolution" value="3.38 A"/>
    <property type="chains" value="C=7-1178"/>
</dbReference>
<dbReference type="PDB" id="7KIN">
    <property type="method" value="EM"/>
    <property type="resolution" value="2.74 A"/>
    <property type="chains" value="C=7-1178"/>
</dbReference>
<dbReference type="PDB" id="7KUF">
    <property type="method" value="X-ray"/>
    <property type="resolution" value="2.60 A"/>
    <property type="chains" value="B=815-829"/>
</dbReference>
<dbReference type="PDB" id="7KUG">
    <property type="method" value="X-ray"/>
    <property type="resolution" value="1.55 A"/>
    <property type="chains" value="B/D=815-829"/>
</dbReference>
<dbReference type="PDB" id="7PP4">
    <property type="method" value="EM"/>
    <property type="resolution" value="3.84 A"/>
    <property type="chains" value="c=6-1178"/>
</dbReference>
<dbReference type="PDB" id="7Q4U">
    <property type="method" value="EM"/>
    <property type="resolution" value="4.39 A"/>
    <property type="chains" value="BA/C/HA/I/NA/O/TA/V=6-1178"/>
</dbReference>
<dbReference type="PDB" id="7Q59">
    <property type="method" value="EM"/>
    <property type="resolution" value="4.36 A"/>
    <property type="chains" value="C/c=6-1178"/>
</dbReference>
<dbReference type="PDB" id="7RWI">
    <property type="method" value="X-ray"/>
    <property type="resolution" value="3.70 A"/>
    <property type="chains" value="C=1-1178"/>
</dbReference>
<dbReference type="PDB" id="7U22">
    <property type="method" value="X-ray"/>
    <property type="resolution" value="3.87 A"/>
    <property type="chains" value="C=1-1178"/>
</dbReference>
<dbReference type="PDB" id="7Z8Q">
    <property type="method" value="EM"/>
    <property type="resolution" value="4.08 A"/>
    <property type="chains" value="c=6-1178"/>
</dbReference>
<dbReference type="PDB" id="7ZF2">
    <property type="method" value="EM"/>
    <property type="resolution" value="3.86 A"/>
    <property type="chains" value="C=7-1178"/>
</dbReference>
<dbReference type="PDB" id="8CWR">
    <property type="method" value="X-ray"/>
    <property type="resolution" value="1.50 A"/>
    <property type="chains" value="B=815-829"/>
</dbReference>
<dbReference type="PDB" id="8CWT">
    <property type="method" value="X-ray"/>
    <property type="resolution" value="1.35 A"/>
    <property type="chains" value="B/D/F=815-829"/>
</dbReference>
<dbReference type="PDB" id="8CYF">
    <property type="method" value="X-ray"/>
    <property type="resolution" value="2.44 A"/>
    <property type="chains" value="B=815-829"/>
</dbReference>
<dbReference type="PDB" id="8D5V">
    <property type="method" value="X-ray"/>
    <property type="resolution" value="1.80 A"/>
    <property type="chains" value="B/D=815-829"/>
</dbReference>
<dbReference type="PDB" id="8E74">
    <property type="method" value="EM"/>
    <property type="resolution" value="2.94 A"/>
    <property type="chains" value="C=7-1178"/>
</dbReference>
<dbReference type="PDB" id="8E79">
    <property type="method" value="EM"/>
    <property type="resolution" value="3.71 A"/>
    <property type="chains" value="C=7-1178"/>
</dbReference>
<dbReference type="PDB" id="8E82">
    <property type="method" value="EM"/>
    <property type="resolution" value="3.03 A"/>
    <property type="chains" value="C=7-1178"/>
</dbReference>
<dbReference type="PDB" id="8E8M">
    <property type="method" value="EM"/>
    <property type="resolution" value="3.13 A"/>
    <property type="chains" value="C=7-1178"/>
</dbReference>
<dbReference type="PDB" id="8E95">
    <property type="method" value="EM"/>
    <property type="resolution" value="2.90 A"/>
    <property type="chains" value="C=7-1178"/>
</dbReference>
<dbReference type="PDB" id="8EHQ">
    <property type="method" value="EM"/>
    <property type="resolution" value="3.00 A"/>
    <property type="chains" value="C=1-1178"/>
</dbReference>
<dbReference type="PDB" id="8EJ3">
    <property type="method" value="EM"/>
    <property type="resolution" value="3.13 A"/>
    <property type="chains" value="C=1-1178"/>
</dbReference>
<dbReference type="PDB" id="8EOE">
    <property type="method" value="EM"/>
    <property type="resolution" value="3.20 A"/>
    <property type="chains" value="C=1-1178"/>
</dbReference>
<dbReference type="PDB" id="8EOF">
    <property type="method" value="EM"/>
    <property type="resolution" value="3.30 A"/>
    <property type="chains" value="C=1-1178"/>
</dbReference>
<dbReference type="PDB" id="8EOS">
    <property type="method" value="EM"/>
    <property type="resolution" value="3.10 A"/>
    <property type="chains" value="C=1-1178"/>
</dbReference>
<dbReference type="PDB" id="8EOT">
    <property type="method" value="EM"/>
    <property type="resolution" value="3.30 A"/>
    <property type="chains" value="C=1-1178"/>
</dbReference>
<dbReference type="PDB" id="8EXY">
    <property type="method" value="EM"/>
    <property type="resolution" value="3.20 A"/>
    <property type="chains" value="C=1-1178"/>
</dbReference>
<dbReference type="PDB" id="8HIH">
    <property type="method" value="EM"/>
    <property type="resolution" value="3.66 A"/>
    <property type="chains" value="C=1-1178"/>
</dbReference>
<dbReference type="PDBsum" id="4KBJ"/>
<dbReference type="PDBsum" id="4KBM"/>
<dbReference type="PDBsum" id="5UH5"/>
<dbReference type="PDBsum" id="5UH6"/>
<dbReference type="PDBsum" id="5UH8"/>
<dbReference type="PDBsum" id="5UH9"/>
<dbReference type="PDBsum" id="5UHA"/>
<dbReference type="PDBsum" id="5UHB"/>
<dbReference type="PDBsum" id="5UHC"/>
<dbReference type="PDBsum" id="5UHD"/>
<dbReference type="PDBsum" id="5UHE"/>
<dbReference type="PDBsum" id="5UHF"/>
<dbReference type="PDBsum" id="5UHG"/>
<dbReference type="PDBsum" id="5ZX2"/>
<dbReference type="PDBsum" id="5ZX3"/>
<dbReference type="PDBsum" id="6BZO"/>
<dbReference type="PDBsum" id="6C04"/>
<dbReference type="PDBsum" id="6C05"/>
<dbReference type="PDBsum" id="6C06"/>
<dbReference type="PDBsum" id="6DV9"/>
<dbReference type="PDBsum" id="6DVB"/>
<dbReference type="PDBsum" id="6DVC"/>
<dbReference type="PDBsum" id="6DVD"/>
<dbReference type="PDBsum" id="6DVE"/>
<dbReference type="PDBsum" id="6EDT"/>
<dbReference type="PDBsum" id="6EE8"/>
<dbReference type="PDBsum" id="6EEC"/>
<dbReference type="PDBsum" id="6FBV"/>
<dbReference type="PDBsum" id="6JCX"/>
<dbReference type="PDBsum" id="6JCY"/>
<dbReference type="PDBsum" id="6KON"/>
<dbReference type="PDBsum" id="6KOO"/>
<dbReference type="PDBsum" id="6KOP"/>
<dbReference type="PDBsum" id="6KOQ"/>
<dbReference type="PDBsum" id="6M7J"/>
<dbReference type="PDBsum" id="6TYE"/>
<dbReference type="PDBsum" id="6TYF"/>
<dbReference type="PDBsum" id="6TYG"/>
<dbReference type="PDBsum" id="6VVX"/>
<dbReference type="PDBsum" id="6VVY"/>
<dbReference type="PDBsum" id="6VVZ"/>
<dbReference type="PDBsum" id="6VW0"/>
<dbReference type="PDBsum" id="7KIF"/>
<dbReference type="PDBsum" id="7KIM"/>
<dbReference type="PDBsum" id="7KIN"/>
<dbReference type="PDBsum" id="7KUF"/>
<dbReference type="PDBsum" id="7KUG"/>
<dbReference type="PDBsum" id="7PP4"/>
<dbReference type="PDBsum" id="7Q4U"/>
<dbReference type="PDBsum" id="7Q59"/>
<dbReference type="PDBsum" id="7RWI"/>
<dbReference type="PDBsum" id="7U22"/>
<dbReference type="PDBsum" id="7Z8Q"/>
<dbReference type="PDBsum" id="7ZF2"/>
<dbReference type="PDBsum" id="8CWR"/>
<dbReference type="PDBsum" id="8CWT"/>
<dbReference type="PDBsum" id="8CYF"/>
<dbReference type="PDBsum" id="8D5V"/>
<dbReference type="PDBsum" id="8E74"/>
<dbReference type="PDBsum" id="8E79"/>
<dbReference type="PDBsum" id="8E82"/>
<dbReference type="PDBsum" id="8E8M"/>
<dbReference type="PDBsum" id="8E95"/>
<dbReference type="PDBsum" id="8EHQ"/>
<dbReference type="PDBsum" id="8EJ3"/>
<dbReference type="PDBsum" id="8EOE"/>
<dbReference type="PDBsum" id="8EOF"/>
<dbReference type="PDBsum" id="8EOS"/>
<dbReference type="PDBsum" id="8EOT"/>
<dbReference type="PDBsum" id="8EXY"/>
<dbReference type="PDBsum" id="8HIH"/>
<dbReference type="EMDB" id="EMD-13579"/>
<dbReference type="EMDB" id="EMD-13817"/>
<dbReference type="EMDB" id="EMD-13829"/>
<dbReference type="EMDB" id="EMD-14378"/>
<dbReference type="EMDB" id="EMD-14560"/>
<dbReference type="EMDB" id="EMD-14974"/>
<dbReference type="EMDB" id="EMD-28149"/>
<dbReference type="EMDB" id="EMD-28174"/>
<dbReference type="EMDB" id="EMD-28373"/>
<dbReference type="EMDB" id="EMD-28374"/>
<dbReference type="EMDB" id="EMD-28466"/>
<dbReference type="EMDB" id="EMD-28467"/>
<dbReference type="EMDB" id="EMD-28665"/>
<dbReference type="EMDB" id="EMD-34816"/>
<dbReference type="EMDB" id="EMD-4230"/>
<dbReference type="EMDB" id="EMD-61492"/>
<dbReference type="EMDB" id="EMD-62293"/>
<dbReference type="EMDB" id="EMD-62294"/>
<dbReference type="EMDB" id="EMD-62295"/>
<dbReference type="SASBDB" id="P9WGY9"/>
<dbReference type="SMR" id="P9WGY9"/>
<dbReference type="FunCoup" id="P9WGY9">
    <property type="interactions" value="364"/>
</dbReference>
<dbReference type="IntAct" id="P9WGY9">
    <property type="interactions" value="3"/>
</dbReference>
<dbReference type="STRING" id="83332.Rv0667"/>
<dbReference type="BindingDB" id="P9WGY9"/>
<dbReference type="ChEMBL" id="CHEMBL2006"/>
<dbReference type="DrugBank" id="DB12466">
    <property type="generic name" value="Favipiravir"/>
</dbReference>
<dbReference type="DrugBank" id="DB01045">
    <property type="generic name" value="Rifampin"/>
</dbReference>
<dbReference type="DrugBank" id="DB11753">
    <property type="generic name" value="Rifamycin"/>
</dbReference>
<dbReference type="DrugBank" id="DB06656">
    <property type="generic name" value="TAS-106"/>
</dbReference>
<dbReference type="DrugCentral" id="P9WGY9"/>
<dbReference type="PaxDb" id="83332-Rv0667"/>
<dbReference type="DNASU" id="888164"/>
<dbReference type="GeneID" id="888164"/>
<dbReference type="KEGG" id="mtu:Rv0667"/>
<dbReference type="PATRIC" id="fig|83332.12.peg.742"/>
<dbReference type="TubercuList" id="Rv0667"/>
<dbReference type="eggNOG" id="COG0085">
    <property type="taxonomic scope" value="Bacteria"/>
</dbReference>
<dbReference type="InParanoid" id="P9WGY9"/>
<dbReference type="OrthoDB" id="9803954at2"/>
<dbReference type="BRENDA" id="2.7.7.6">
    <property type="organism ID" value="3445"/>
</dbReference>
<dbReference type="Reactome" id="R-HSA-9639775">
    <property type="pathway name" value="Antimicrobial action and antimicrobial resistance in Mtb"/>
</dbReference>
<dbReference type="EvolutionaryTrace" id="P9WGY9"/>
<dbReference type="Proteomes" id="UP000001584">
    <property type="component" value="Chromosome"/>
</dbReference>
<dbReference type="GO" id="GO:0005829">
    <property type="term" value="C:cytosol"/>
    <property type="evidence" value="ECO:0007005"/>
    <property type="project" value="MTBBASE"/>
</dbReference>
<dbReference type="GO" id="GO:0000428">
    <property type="term" value="C:DNA-directed RNA polymerase complex"/>
    <property type="evidence" value="ECO:0007669"/>
    <property type="project" value="UniProtKB-KW"/>
</dbReference>
<dbReference type="GO" id="GO:0009274">
    <property type="term" value="C:peptidoglycan-based cell wall"/>
    <property type="evidence" value="ECO:0007005"/>
    <property type="project" value="MTBBASE"/>
</dbReference>
<dbReference type="GO" id="GO:0005886">
    <property type="term" value="C:plasma membrane"/>
    <property type="evidence" value="ECO:0007005"/>
    <property type="project" value="MTBBASE"/>
</dbReference>
<dbReference type="GO" id="GO:0003677">
    <property type="term" value="F:DNA binding"/>
    <property type="evidence" value="ECO:0007669"/>
    <property type="project" value="UniProtKB-UniRule"/>
</dbReference>
<dbReference type="GO" id="GO:0003899">
    <property type="term" value="F:DNA-directed RNA polymerase activity"/>
    <property type="evidence" value="ECO:0007669"/>
    <property type="project" value="UniProtKB-UniRule"/>
</dbReference>
<dbReference type="GO" id="GO:0032549">
    <property type="term" value="F:ribonucleoside binding"/>
    <property type="evidence" value="ECO:0007669"/>
    <property type="project" value="InterPro"/>
</dbReference>
<dbReference type="GO" id="GO:0006351">
    <property type="term" value="P:DNA-templated transcription"/>
    <property type="evidence" value="ECO:0007669"/>
    <property type="project" value="UniProtKB-UniRule"/>
</dbReference>
<dbReference type="GO" id="GO:0046677">
    <property type="term" value="P:response to antibiotic"/>
    <property type="evidence" value="ECO:0007669"/>
    <property type="project" value="UniProtKB-KW"/>
</dbReference>
<dbReference type="CDD" id="cd00653">
    <property type="entry name" value="RNA_pol_B_RPB2"/>
    <property type="match status" value="1"/>
</dbReference>
<dbReference type="FunFam" id="3.90.1800.10:FF:000005">
    <property type="entry name" value="DNA-directed RNA polymerase subunit beta"/>
    <property type="match status" value="1"/>
</dbReference>
<dbReference type="Gene3D" id="2.40.50.100">
    <property type="match status" value="1"/>
</dbReference>
<dbReference type="Gene3D" id="2.40.50.150">
    <property type="match status" value="1"/>
</dbReference>
<dbReference type="Gene3D" id="3.90.1100.10">
    <property type="match status" value="1"/>
</dbReference>
<dbReference type="Gene3D" id="2.30.150.10">
    <property type="entry name" value="DNA-directed RNA polymerase, beta subunit, external 1 domain"/>
    <property type="match status" value="1"/>
</dbReference>
<dbReference type="Gene3D" id="2.40.270.10">
    <property type="entry name" value="DNA-directed RNA polymerase, subunit 2, domain 6"/>
    <property type="match status" value="1"/>
</dbReference>
<dbReference type="Gene3D" id="3.90.1800.10">
    <property type="entry name" value="RNA polymerase alpha subunit dimerisation domain"/>
    <property type="match status" value="1"/>
</dbReference>
<dbReference type="Gene3D" id="3.90.1110.10">
    <property type="entry name" value="RNA polymerase Rpb2, domain 2"/>
    <property type="match status" value="1"/>
</dbReference>
<dbReference type="HAMAP" id="MF_01321">
    <property type="entry name" value="RNApol_bact_RpoB"/>
    <property type="match status" value="1"/>
</dbReference>
<dbReference type="InterPro" id="IPR042107">
    <property type="entry name" value="DNA-dir_RNA_pol_bsu_ext_1_sf"/>
</dbReference>
<dbReference type="InterPro" id="IPR019462">
    <property type="entry name" value="DNA-dir_RNA_pol_bsu_external_1"/>
</dbReference>
<dbReference type="InterPro" id="IPR015712">
    <property type="entry name" value="DNA-dir_RNA_pol_su2"/>
</dbReference>
<dbReference type="InterPro" id="IPR007120">
    <property type="entry name" value="DNA-dir_RNAP_su2_dom"/>
</dbReference>
<dbReference type="InterPro" id="IPR037033">
    <property type="entry name" value="DNA-dir_RNAP_su2_hyb_sf"/>
</dbReference>
<dbReference type="InterPro" id="IPR010243">
    <property type="entry name" value="RNA_pol_bsu_bac"/>
</dbReference>
<dbReference type="InterPro" id="IPR007121">
    <property type="entry name" value="RNA_pol_bsu_CS"/>
</dbReference>
<dbReference type="InterPro" id="IPR007644">
    <property type="entry name" value="RNA_pol_bsu_protrusion"/>
</dbReference>
<dbReference type="InterPro" id="IPR007642">
    <property type="entry name" value="RNA_pol_Rpb2_2"/>
</dbReference>
<dbReference type="InterPro" id="IPR037034">
    <property type="entry name" value="RNA_pol_Rpb2_2_sf"/>
</dbReference>
<dbReference type="InterPro" id="IPR007645">
    <property type="entry name" value="RNA_pol_Rpb2_3"/>
</dbReference>
<dbReference type="InterPro" id="IPR007641">
    <property type="entry name" value="RNA_pol_Rpb2_7"/>
</dbReference>
<dbReference type="InterPro" id="IPR014724">
    <property type="entry name" value="RNA_pol_RPB2_OB-fold"/>
</dbReference>
<dbReference type="NCBIfam" id="NF001616">
    <property type="entry name" value="PRK00405.1"/>
    <property type="match status" value="1"/>
</dbReference>
<dbReference type="NCBIfam" id="TIGR02013">
    <property type="entry name" value="rpoB"/>
    <property type="match status" value="1"/>
</dbReference>
<dbReference type="PANTHER" id="PTHR20856">
    <property type="entry name" value="DNA-DIRECTED RNA POLYMERASE I SUBUNIT 2"/>
    <property type="match status" value="1"/>
</dbReference>
<dbReference type="Pfam" id="PF04563">
    <property type="entry name" value="RNA_pol_Rpb2_1"/>
    <property type="match status" value="1"/>
</dbReference>
<dbReference type="Pfam" id="PF04561">
    <property type="entry name" value="RNA_pol_Rpb2_2"/>
    <property type="match status" value="1"/>
</dbReference>
<dbReference type="Pfam" id="PF04565">
    <property type="entry name" value="RNA_pol_Rpb2_3"/>
    <property type="match status" value="1"/>
</dbReference>
<dbReference type="Pfam" id="PF10385">
    <property type="entry name" value="RNA_pol_Rpb2_45"/>
    <property type="match status" value="1"/>
</dbReference>
<dbReference type="Pfam" id="PF00562">
    <property type="entry name" value="RNA_pol_Rpb2_6"/>
    <property type="match status" value="1"/>
</dbReference>
<dbReference type="Pfam" id="PF04560">
    <property type="entry name" value="RNA_pol_Rpb2_7"/>
    <property type="match status" value="1"/>
</dbReference>
<dbReference type="SUPFAM" id="SSF64484">
    <property type="entry name" value="beta and beta-prime subunits of DNA dependent RNA-polymerase"/>
    <property type="match status" value="1"/>
</dbReference>
<dbReference type="PROSITE" id="PS01166">
    <property type="entry name" value="RNA_POL_BETA"/>
    <property type="match status" value="1"/>
</dbReference>
<feature type="chain" id="PRO_0000047927" description="DNA-directed RNA polymerase subunit beta">
    <location>
        <begin position="1"/>
        <end position="1178"/>
    </location>
</feature>
<feature type="region of interest" description="Disordered" evidence="2">
    <location>
        <begin position="1"/>
        <end position="37"/>
    </location>
</feature>
<feature type="compositionally biased region" description="Low complexity" evidence="2">
    <location>
        <begin position="18"/>
        <end position="33"/>
    </location>
</feature>
<feature type="sequence variant" description="In strain: vr1; rifampicin-resistant.">
    <original>V</original>
    <variation>A</variation>
    <location>
        <position position="423"/>
    </location>
</feature>
<feature type="sequence variant" description="In strain: vr2; rifampicin-resistant.">
    <original>L</original>
    <variation>P</variation>
    <location>
        <position position="436"/>
    </location>
</feature>
<feature type="sequence variant" description="In strain: vr3; rifampicin-resistant.">
    <original>S</original>
    <variation>T</variation>
    <location>
        <position position="437"/>
    </location>
</feature>
<feature type="sequence variant" description="In strain: RJ49; rifampicin-resistant.">
    <original>QFMD</original>
    <variation>H</variation>
    <location>
        <begin position="438"/>
        <end position="441"/>
    </location>
</feature>
<feature type="sequence variant" description="In strain: vr4; rifampicin-resistant.">
    <original>Q</original>
    <variation>L</variation>
    <location>
        <position position="438"/>
    </location>
</feature>
<feature type="sequence variant" description="In strain: RJ37; rifampicin-resistant.">
    <original>F</original>
    <variation>V</variation>
    <location>
        <position position="439"/>
    </location>
</feature>
<feature type="sequence variant" description="In strain: RJ55; rifampicin-resistant.">
    <location>
        <begin position="440"/>
        <end position="443"/>
    </location>
</feature>
<feature type="sequence variant" description="In strain: vr3; rifampicin-resistant.">
    <original>D</original>
    <variation>V</variation>
    <location>
        <position position="441"/>
    </location>
</feature>
<feature type="sequence variant" description="In strain: RJ48; rifampicin-resistant.">
    <original>LTHK</original>
    <variation>WPQ</variation>
    <location>
        <begin position="449"/>
        <end position="452"/>
    </location>
</feature>
<feature type="sequence variant" description="In strain: vr5; rifampicin-resistant.">
    <original>H</original>
    <variation>D</variation>
    <location>
        <position position="451"/>
    </location>
</feature>
<feature type="sequence variant" description="In strain: SP28; rifampicin-resistant.">
    <original>H</original>
    <variation>L</variation>
    <location>
        <position position="451"/>
    </location>
</feature>
<feature type="sequence variant" description="In strain: vr6; rifampicin-resistant.">
    <original>H</original>
    <variation>N</variation>
    <location>
        <position position="451"/>
    </location>
</feature>
<feature type="sequence variant" description="In strain: vr8; rifampicin-resistant.">
    <original>H</original>
    <variation>P</variation>
    <location>
        <position position="451"/>
    </location>
</feature>
<feature type="sequence variant" description="In strain: vr1; rifampicin-resistant.">
    <original>H</original>
    <variation>Q</variation>
    <location>
        <position position="451"/>
    </location>
</feature>
<feature type="sequence variant" description="In strain: vr7; rifampicin-resistant.">
    <original>H</original>
    <variation>R</variation>
    <location>
        <position position="451"/>
    </location>
</feature>
<feature type="sequence variant" description="In strain: vr11 and RJ37; rifampicin-resistant.">
    <original>S</original>
    <variation>L</variation>
    <location>
        <position position="456"/>
    </location>
</feature>
<feature type="sequence variant" description="In strain: vr9; rifampicin-resistant.">
    <original>S</original>
    <variation>Q</variation>
    <location>
        <position position="456"/>
    </location>
</feature>
<feature type="sequence variant" description="In strain: vr10; rifampicin-resistant.">
    <original>S</original>
    <variation>W</variation>
    <location>
        <position position="456"/>
    </location>
</feature>
<feature type="sequence variant" description="In strain: vr12 and SP22; rifampicin-resistant.">
    <original>L</original>
    <variation>P</variation>
    <location>
        <position position="458"/>
    </location>
</feature>
<feature type="mutagenesis site" description="Weakens interaction with TRCF and CarD." evidence="4">
    <original>E</original>
    <variation>R</variation>
    <location>
        <position position="138"/>
    </location>
</feature>
<feature type="mutagenesis site" description="Weakens interaction with TRCF and CarD." evidence="4">
    <original>I</original>
    <variation>A</variation>
    <location>
        <position position="147"/>
    </location>
</feature>
<feature type="mutagenesis site" description="Does not affect association with TRCF, but weakens interaction with CarD." evidence="4">
    <original>K</original>
    <variation>A</variation>
    <location>
        <position position="148"/>
    </location>
</feature>
<feature type="mutagenesis site" description="Does not affect association with TRCF, but weakens interaction with CarD." evidence="4">
    <original>S</original>
    <variation>A</variation>
    <location>
        <position position="149"/>
    </location>
</feature>
<feature type="sequence conflict" description="In Ref. 6; AAB31207." evidence="5" ref="6">
    <original>D</original>
    <variation>E</variation>
    <location>
        <position position="441"/>
    </location>
</feature>
<feature type="sequence conflict" description="In Ref. 3; AAA20242." evidence="5" ref="3">
    <original>E</original>
    <variation>G</variation>
    <location>
        <position position="527"/>
    </location>
</feature>
<feature type="sequence conflict" description="In Ref. 1; AAA21416 and 3; AAA20242." evidence="5" ref="1 3">
    <original>GDVVVAE</original>
    <variation>ATSSSQ</variation>
    <location>
        <begin position="639"/>
        <end position="645"/>
    </location>
</feature>
<feature type="sequence conflict" description="In Ref. 1; AAA21416." evidence="5" ref="1">
    <original>QP</original>
    <variation>HA</variation>
    <location>
        <begin position="967"/>
        <end position="968"/>
    </location>
</feature>
<feature type="sequence conflict" description="In Ref. 1; AAA21416." evidence="5" ref="1">
    <original>V</original>
    <variation>F</variation>
    <location>
        <position position="1174"/>
    </location>
</feature>
<feature type="strand" evidence="9">
    <location>
        <begin position="25"/>
        <end position="28"/>
    </location>
</feature>
<feature type="strand" evidence="20">
    <location>
        <begin position="30"/>
        <end position="32"/>
    </location>
</feature>
<feature type="strand" evidence="13">
    <location>
        <begin position="38"/>
        <end position="40"/>
    </location>
</feature>
<feature type="helix" evidence="7">
    <location>
        <begin position="54"/>
        <end position="64"/>
    </location>
</feature>
<feature type="helix" evidence="7">
    <location>
        <begin position="68"/>
        <end position="77"/>
    </location>
</feature>
<feature type="helix" evidence="7">
    <location>
        <begin position="85"/>
        <end position="93"/>
    </location>
</feature>
<feature type="strand" evidence="10">
    <location>
        <begin position="95"/>
        <end position="97"/>
    </location>
</feature>
<feature type="strand" evidence="7">
    <location>
        <begin position="101"/>
        <end position="112"/>
    </location>
</feature>
<feature type="helix" evidence="7">
    <location>
        <begin position="119"/>
        <end position="124"/>
    </location>
</feature>
<feature type="strand" evidence="7">
    <location>
        <begin position="130"/>
        <end position="141"/>
    </location>
</feature>
<feature type="turn" evidence="7">
    <location>
        <begin position="142"/>
        <end position="145"/>
    </location>
</feature>
<feature type="strand" evidence="7">
    <location>
        <begin position="146"/>
        <end position="158"/>
    </location>
</feature>
<feature type="strand" evidence="19">
    <location>
        <begin position="162"/>
        <end position="164"/>
    </location>
</feature>
<feature type="strand" evidence="7">
    <location>
        <begin position="166"/>
        <end position="168"/>
    </location>
</feature>
<feature type="strand" evidence="7">
    <location>
        <begin position="171"/>
        <end position="173"/>
    </location>
</feature>
<feature type="strand" evidence="7">
    <location>
        <begin position="178"/>
        <end position="181"/>
    </location>
</feature>
<feature type="strand" evidence="7">
    <location>
        <begin position="183"/>
        <end position="191"/>
    </location>
</feature>
<feature type="turn" evidence="7">
    <location>
        <begin position="193"/>
        <end position="195"/>
    </location>
</feature>
<feature type="strand" evidence="7">
    <location>
        <begin position="198"/>
        <end position="205"/>
    </location>
</feature>
<feature type="strand" evidence="7">
    <location>
        <begin position="207"/>
        <end position="209"/>
    </location>
</feature>
<feature type="strand" evidence="7">
    <location>
        <begin position="212"/>
        <end position="216"/>
    </location>
</feature>
<feature type="strand" evidence="16">
    <location>
        <begin position="218"/>
        <end position="220"/>
    </location>
</feature>
<feature type="strand" evidence="7">
    <location>
        <begin position="222"/>
        <end position="226"/>
    </location>
</feature>
<feature type="strand" evidence="24">
    <location>
        <begin position="228"/>
        <end position="230"/>
    </location>
</feature>
<feature type="strand" evidence="11">
    <location>
        <begin position="231"/>
        <end position="233"/>
    </location>
</feature>
<feature type="helix" evidence="7">
    <location>
        <begin position="234"/>
        <end position="240"/>
    </location>
</feature>
<feature type="helix" evidence="7">
    <location>
        <begin position="245"/>
        <end position="252"/>
    </location>
</feature>
<feature type="helix" evidence="7">
    <location>
        <begin position="256"/>
        <end position="264"/>
    </location>
</feature>
<feature type="helix" evidence="7">
    <location>
        <begin position="269"/>
        <end position="281"/>
    </location>
</feature>
<feature type="strand" evidence="8">
    <location>
        <begin position="282"/>
        <end position="285"/>
    </location>
</feature>
<feature type="helix" evidence="7">
    <location>
        <begin position="289"/>
        <end position="300"/>
    </location>
</feature>
<feature type="turn" evidence="7">
    <location>
        <begin position="303"/>
        <end position="305"/>
    </location>
</feature>
<feature type="helix" evidence="7">
    <location>
        <begin position="309"/>
        <end position="320"/>
    </location>
</feature>
<feature type="strand" evidence="6">
    <location>
        <begin position="323"/>
        <end position="325"/>
    </location>
</feature>
<feature type="helix" evidence="7">
    <location>
        <begin position="335"/>
        <end position="349"/>
    </location>
</feature>
<feature type="strand" evidence="16">
    <location>
        <begin position="353"/>
        <end position="356"/>
    </location>
</feature>
<feature type="strand" evidence="22">
    <location>
        <begin position="358"/>
        <end position="360"/>
    </location>
</feature>
<feature type="strand" evidence="16">
    <location>
        <begin position="362"/>
        <end position="364"/>
    </location>
</feature>
<feature type="strand" evidence="21">
    <location>
        <begin position="370"/>
        <end position="372"/>
    </location>
</feature>
<feature type="strand" evidence="7">
    <location>
        <begin position="375"/>
        <end position="379"/>
    </location>
</feature>
<feature type="helix" evidence="7">
    <location>
        <begin position="381"/>
        <end position="406"/>
    </location>
</feature>
<feature type="turn" evidence="7">
    <location>
        <begin position="409"/>
        <end position="411"/>
    </location>
</feature>
<feature type="helix" evidence="7">
    <location>
        <begin position="414"/>
        <end position="417"/>
    </location>
</feature>
<feature type="helix" evidence="7">
    <location>
        <begin position="421"/>
        <end position="430"/>
    </location>
</feature>
<feature type="strand" evidence="23">
    <location>
        <begin position="431"/>
        <end position="433"/>
    </location>
</feature>
<feature type="strand" evidence="16">
    <location>
        <begin position="435"/>
        <end position="439"/>
    </location>
</feature>
<feature type="helix" evidence="16">
    <location>
        <begin position="445"/>
        <end position="451"/>
    </location>
</feature>
<feature type="strand" evidence="16">
    <location>
        <begin position="452"/>
        <end position="459"/>
    </location>
</feature>
<feature type="strand" evidence="16">
    <location>
        <begin position="465"/>
        <end position="467"/>
    </location>
</feature>
<feature type="helix" evidence="9">
    <location>
        <begin position="470"/>
        <end position="473"/>
    </location>
</feature>
<feature type="helix" evidence="16">
    <location>
        <begin position="477"/>
        <end position="479"/>
    </location>
</feature>
<feature type="turn" evidence="16">
    <location>
        <begin position="480"/>
        <end position="482"/>
    </location>
</feature>
<feature type="turn" evidence="9">
    <location>
        <begin position="492"/>
        <end position="496"/>
    </location>
</feature>
<feature type="strand" evidence="16">
    <location>
        <begin position="497"/>
        <end position="500"/>
    </location>
</feature>
<feature type="strand" evidence="16">
    <location>
        <begin position="508"/>
        <end position="510"/>
    </location>
</feature>
<feature type="strand" evidence="16">
    <location>
        <begin position="512"/>
        <end position="520"/>
    </location>
</feature>
<feature type="strand" evidence="16">
    <location>
        <begin position="523"/>
        <end position="531"/>
    </location>
</feature>
<feature type="helix" evidence="16">
    <location>
        <begin position="533"/>
        <end position="538"/>
    </location>
</feature>
<feature type="strand" evidence="15">
    <location>
        <begin position="544"/>
        <end position="546"/>
    </location>
</feature>
<feature type="strand" evidence="16">
    <location>
        <begin position="550"/>
        <end position="560"/>
    </location>
</feature>
<feature type="strand" evidence="12">
    <location>
        <begin position="561"/>
        <end position="563"/>
    </location>
</feature>
<feature type="strand" evidence="8">
    <location>
        <begin position="564"/>
        <end position="566"/>
    </location>
</feature>
<feature type="strand" evidence="12">
    <location>
        <begin position="567"/>
        <end position="569"/>
    </location>
</feature>
<feature type="strand" evidence="16">
    <location>
        <begin position="570"/>
        <end position="572"/>
    </location>
</feature>
<feature type="turn" evidence="16">
    <location>
        <begin position="573"/>
        <end position="575"/>
    </location>
</feature>
<feature type="strand" evidence="16">
    <location>
        <begin position="578"/>
        <end position="581"/>
    </location>
</feature>
<feature type="turn" evidence="16">
    <location>
        <begin position="583"/>
        <end position="586"/>
    </location>
</feature>
<feature type="turn" evidence="16">
    <location>
        <begin position="589"/>
        <end position="593"/>
    </location>
</feature>
<feature type="helix" evidence="16">
    <location>
        <begin position="597"/>
        <end position="599"/>
    </location>
</feature>
<feature type="helix" evidence="16">
    <location>
        <begin position="602"/>
        <end position="611"/>
    </location>
</feature>
<feature type="turn" evidence="20">
    <location>
        <begin position="612"/>
        <end position="614"/>
    </location>
</feature>
<feature type="strand" evidence="16">
    <location>
        <begin position="618"/>
        <end position="620"/>
    </location>
</feature>
<feature type="strand" evidence="16">
    <location>
        <begin position="625"/>
        <end position="627"/>
    </location>
</feature>
<feature type="turn" evidence="16">
    <location>
        <begin position="630"/>
        <end position="632"/>
    </location>
</feature>
<feature type="helix" evidence="16">
    <location>
        <begin position="633"/>
        <end position="636"/>
    </location>
</feature>
<feature type="turn" evidence="21">
    <location>
        <begin position="637"/>
        <end position="639"/>
    </location>
</feature>
<feature type="strand" evidence="16">
    <location>
        <begin position="641"/>
        <end position="643"/>
    </location>
</feature>
<feature type="strand" evidence="16">
    <location>
        <begin position="648"/>
        <end position="653"/>
    </location>
</feature>
<feature type="strand" evidence="16">
    <location>
        <begin position="655"/>
        <end position="665"/>
    </location>
</feature>
<feature type="strand" evidence="16">
    <location>
        <begin position="667"/>
        <end position="671"/>
    </location>
</feature>
<feature type="strand" evidence="9">
    <location>
        <begin position="675"/>
        <end position="677"/>
    </location>
</feature>
<feature type="strand" evidence="9">
    <location>
        <begin position="681"/>
        <end position="684"/>
    </location>
</feature>
<feature type="strand" evidence="16">
    <location>
        <begin position="701"/>
        <end position="703"/>
    </location>
</feature>
<feature type="strand" evidence="16">
    <location>
        <begin position="706"/>
        <end position="709"/>
    </location>
</feature>
<feature type="strand" evidence="16">
    <location>
        <begin position="716"/>
        <end position="722"/>
    </location>
</feature>
<feature type="turn" evidence="16">
    <location>
        <begin position="727"/>
        <end position="732"/>
    </location>
</feature>
<feature type="strand" evidence="16">
    <location>
        <begin position="735"/>
        <end position="737"/>
    </location>
</feature>
<feature type="helix" evidence="16">
    <location>
        <begin position="740"/>
        <end position="743"/>
    </location>
</feature>
<feature type="turn" evidence="16">
    <location>
        <begin position="744"/>
        <end position="747"/>
    </location>
</feature>
<feature type="strand" evidence="16">
    <location>
        <begin position="749"/>
        <end position="761"/>
    </location>
</feature>
<feature type="turn" evidence="20">
    <location>
        <begin position="762"/>
        <end position="765"/>
    </location>
</feature>
<feature type="strand" evidence="20">
    <location>
        <begin position="768"/>
        <end position="771"/>
    </location>
</feature>
<feature type="helix" evidence="15">
    <location>
        <begin position="779"/>
        <end position="781"/>
    </location>
</feature>
<feature type="strand" evidence="16">
    <location>
        <begin position="782"/>
        <end position="784"/>
    </location>
</feature>
<feature type="strand" evidence="16">
    <location>
        <begin position="788"/>
        <end position="790"/>
    </location>
</feature>
<feature type="strand" evidence="8">
    <location>
        <begin position="795"/>
        <end position="797"/>
    </location>
</feature>
<feature type="strand" evidence="16">
    <location>
        <begin position="801"/>
        <end position="803"/>
    </location>
</feature>
<feature type="strand" evidence="16">
    <location>
        <begin position="805"/>
        <end position="808"/>
    </location>
</feature>
<feature type="helix" evidence="9">
    <location>
        <begin position="811"/>
        <end position="813"/>
    </location>
</feature>
<feature type="helix" evidence="18">
    <location>
        <begin position="816"/>
        <end position="825"/>
    </location>
</feature>
<feature type="helix" evidence="17">
    <location>
        <begin position="826"/>
        <end position="828"/>
    </location>
</feature>
<feature type="strand" evidence="16">
    <location>
        <begin position="831"/>
        <end position="834"/>
    </location>
</feature>
<feature type="strand" evidence="25">
    <location>
        <begin position="835"/>
        <end position="838"/>
    </location>
</feature>
<feature type="strand" evidence="16">
    <location>
        <begin position="845"/>
        <end position="854"/>
    </location>
</feature>
<feature type="turn" evidence="16">
    <location>
        <begin position="855"/>
        <end position="858"/>
    </location>
</feature>
<feature type="strand" evidence="16">
    <location>
        <begin position="865"/>
        <end position="877"/>
    </location>
</feature>
<feature type="strand" evidence="16">
    <location>
        <begin position="884"/>
        <end position="886"/>
    </location>
</feature>
<feature type="strand" evidence="14">
    <location>
        <begin position="888"/>
        <end position="890"/>
    </location>
</feature>
<feature type="strand" evidence="16">
    <location>
        <begin position="893"/>
        <end position="898"/>
    </location>
</feature>
<feature type="helix" evidence="9">
    <location>
        <begin position="901"/>
        <end position="903"/>
    </location>
</feature>
<feature type="strand" evidence="15">
    <location>
        <begin position="908"/>
        <end position="910"/>
    </location>
</feature>
<feature type="strand" evidence="16">
    <location>
        <begin position="914"/>
        <end position="916"/>
    </location>
</feature>
<feature type="helix" evidence="8">
    <location>
        <begin position="919"/>
        <end position="921"/>
    </location>
</feature>
<feature type="turn" evidence="16">
    <location>
        <begin position="923"/>
        <end position="925"/>
    </location>
</feature>
<feature type="helix" evidence="16">
    <location>
        <begin position="929"/>
        <end position="942"/>
    </location>
</feature>
<feature type="strand" evidence="16">
    <location>
        <begin position="949"/>
        <end position="951"/>
    </location>
</feature>
<feature type="helix" evidence="16">
    <location>
        <begin position="954"/>
        <end position="956"/>
    </location>
</feature>
<feature type="strand" evidence="16">
    <location>
        <begin position="957"/>
        <end position="959"/>
    </location>
</feature>
<feature type="strand" evidence="16">
    <location>
        <begin position="963"/>
        <end position="966"/>
    </location>
</feature>
<feature type="strand" evidence="16">
    <location>
        <begin position="976"/>
        <end position="978"/>
    </location>
</feature>
<feature type="helix" evidence="16">
    <location>
        <begin position="982"/>
        <end position="990"/>
    </location>
</feature>
<feature type="strand" evidence="16">
    <location>
        <begin position="996"/>
        <end position="998"/>
    </location>
</feature>
<feature type="strand" evidence="16">
    <location>
        <begin position="1006"/>
        <end position="1008"/>
    </location>
</feature>
<feature type="turn" evidence="16">
    <location>
        <begin position="1013"/>
        <end position="1015"/>
    </location>
</feature>
<feature type="strand" evidence="16">
    <location>
        <begin position="1023"/>
        <end position="1034"/>
    </location>
</feature>
<feature type="helix" evidence="16">
    <location>
        <begin position="1037"/>
        <end position="1040"/>
    </location>
</feature>
<feature type="strand" evidence="9">
    <location>
        <begin position="1042"/>
        <end position="1046"/>
    </location>
</feature>
<feature type="strand" evidence="16">
    <location>
        <begin position="1051"/>
        <end position="1053"/>
    </location>
</feature>
<feature type="turn" evidence="9">
    <location>
        <begin position="1060"/>
        <end position="1063"/>
    </location>
</feature>
<feature type="strand" evidence="16">
    <location>
        <begin position="1066"/>
        <end position="1068"/>
    </location>
</feature>
<feature type="helix" evidence="16">
    <location>
        <begin position="1070"/>
        <end position="1079"/>
    </location>
</feature>
<feature type="helix" evidence="16">
    <location>
        <begin position="1082"/>
        <end position="1089"/>
    </location>
</feature>
<feature type="turn" evidence="16">
    <location>
        <begin position="1090"/>
        <end position="1094"/>
    </location>
</feature>
<feature type="helix" evidence="16">
    <location>
        <begin position="1096"/>
        <end position="1108"/>
    </location>
</feature>
<feature type="helix" evidence="16">
    <location>
        <begin position="1119"/>
        <end position="1130"/>
    </location>
</feature>
<feature type="strand" evidence="16">
    <location>
        <begin position="1136"/>
        <end position="1138"/>
    </location>
</feature>
<feature type="strand" evidence="14">
    <location>
        <begin position="1140"/>
        <end position="1142"/>
    </location>
</feature>
<feature type="helix" evidence="9">
    <location>
        <begin position="1152"/>
        <end position="1162"/>
    </location>
</feature>
<feature type="strand" evidence="24">
    <location>
        <begin position="1163"/>
        <end position="1165"/>
    </location>
</feature>
<proteinExistence type="evidence at protein level"/>
<accession>P9WGY9</accession>
<accession>L0T4D5</accession>
<accession>O08406</accession>
<accession>P0A680</accession>
<accession>P47766</accession>
<accession>Q53424</accession>
<accession>Q59564</accession>
<accession>Q9X6Q3</accession>
<accession>Q9X6U9</accession>
<accession>Q9XC82</accession>
<accession>Q9XC83</accession>
<accession>Q9XC84</accession>
<accession>Q9XC85</accession>
<evidence type="ECO:0000255" key="1">
    <source>
        <dbReference type="HAMAP-Rule" id="MF_01321"/>
    </source>
</evidence>
<evidence type="ECO:0000256" key="2">
    <source>
        <dbReference type="SAM" id="MobiDB-lite"/>
    </source>
</evidence>
<evidence type="ECO:0000269" key="3">
    <source>
    </source>
</evidence>
<evidence type="ECO:0000269" key="4">
    <source>
    </source>
</evidence>
<evidence type="ECO:0000305" key="5"/>
<evidence type="ECO:0007829" key="6">
    <source>
        <dbReference type="PDB" id="4KBJ"/>
    </source>
</evidence>
<evidence type="ECO:0007829" key="7">
    <source>
        <dbReference type="PDB" id="4KBM"/>
    </source>
</evidence>
<evidence type="ECO:0007829" key="8">
    <source>
        <dbReference type="PDB" id="5ZX2"/>
    </source>
</evidence>
<evidence type="ECO:0007829" key="9">
    <source>
        <dbReference type="PDB" id="5ZX3"/>
    </source>
</evidence>
<evidence type="ECO:0007829" key="10">
    <source>
        <dbReference type="PDB" id="6BZO"/>
    </source>
</evidence>
<evidence type="ECO:0007829" key="11">
    <source>
        <dbReference type="PDB" id="6DVC"/>
    </source>
</evidence>
<evidence type="ECO:0007829" key="12">
    <source>
        <dbReference type="PDB" id="6JCX"/>
    </source>
</evidence>
<evidence type="ECO:0007829" key="13">
    <source>
        <dbReference type="PDB" id="6KON"/>
    </source>
</evidence>
<evidence type="ECO:0007829" key="14">
    <source>
        <dbReference type="PDB" id="6KOO"/>
    </source>
</evidence>
<evidence type="ECO:0007829" key="15">
    <source>
        <dbReference type="PDB" id="7KIF"/>
    </source>
</evidence>
<evidence type="ECO:0007829" key="16">
    <source>
        <dbReference type="PDB" id="7KIN"/>
    </source>
</evidence>
<evidence type="ECO:0007829" key="17">
    <source>
        <dbReference type="PDB" id="7KUG"/>
    </source>
</evidence>
<evidence type="ECO:0007829" key="18">
    <source>
        <dbReference type="PDB" id="8CWT"/>
    </source>
</evidence>
<evidence type="ECO:0007829" key="19">
    <source>
        <dbReference type="PDB" id="8E82"/>
    </source>
</evidence>
<evidence type="ECO:0007829" key="20">
    <source>
        <dbReference type="PDB" id="8E95"/>
    </source>
</evidence>
<evidence type="ECO:0007829" key="21">
    <source>
        <dbReference type="PDB" id="8EHQ"/>
    </source>
</evidence>
<evidence type="ECO:0007829" key="22">
    <source>
        <dbReference type="PDB" id="8EJ3"/>
    </source>
</evidence>
<evidence type="ECO:0007829" key="23">
    <source>
        <dbReference type="PDB" id="8EOE"/>
    </source>
</evidence>
<evidence type="ECO:0007829" key="24">
    <source>
        <dbReference type="PDB" id="8EOS"/>
    </source>
</evidence>
<evidence type="ECO:0007829" key="25">
    <source>
        <dbReference type="PDB" id="8EXY"/>
    </source>
</evidence>